<organism>
    <name type="scientific">Mycoplasma pneumoniae (strain ATCC 29342 / M129 / Subtype 1)</name>
    <name type="common">Mycoplasmoides pneumoniae</name>
    <dbReference type="NCBI Taxonomy" id="272634"/>
    <lineage>
        <taxon>Bacteria</taxon>
        <taxon>Bacillati</taxon>
        <taxon>Mycoplasmatota</taxon>
        <taxon>Mycoplasmoidales</taxon>
        <taxon>Mycoplasmoidaceae</taxon>
        <taxon>Mycoplasmoides</taxon>
    </lineage>
</organism>
<sequence>MAKAPTFFSKLLKQILFANRKPFLYYKLALILFVGFVILFQVFMLRAALNGEKGINGANGTDVARSSFISIYVIGNKGVGFSLLADQPGLVYFLQGFLSFIALFFLVFSTSYNYIFWITTLAFGSLGNFFDRLTSGSGEVLDYFVFSGGNSVFNLADCCITFSFIGLFLSFLIQFFKEMKQTKS</sequence>
<comment type="function">
    <text evidence="1">This protein specifically catalyzes the removal of signal peptides from prolipoproteins.</text>
</comment>
<comment type="catalytic activity">
    <reaction evidence="1">
        <text>Release of signal peptides from bacterial membrane prolipoproteins. Hydrolyzes -Xaa-Yaa-Zaa-|-(S,diacylglyceryl)Cys-, in which Xaa is hydrophobic (preferably Leu), and Yaa (Ala or Ser) and Zaa (Gly or Ala) have small, neutral side chains.</text>
        <dbReference type="EC" id="3.4.23.36"/>
    </reaction>
</comment>
<comment type="pathway">
    <text evidence="1">Protein modification; lipoprotein biosynthesis (signal peptide cleavage).</text>
</comment>
<comment type="subcellular location">
    <subcellularLocation>
        <location evidence="1">Cell membrane</location>
        <topology evidence="1">Multi-pass membrane protein</topology>
    </subcellularLocation>
</comment>
<comment type="similarity">
    <text evidence="1 2">Belongs to the peptidase A8 family.</text>
</comment>
<feature type="chain" id="PRO_0000178795" description="Lipoprotein signal peptidase">
    <location>
        <begin position="1"/>
        <end position="184"/>
    </location>
</feature>
<feature type="transmembrane region" description="Helical" evidence="1">
    <location>
        <begin position="23"/>
        <end position="43"/>
    </location>
</feature>
<feature type="transmembrane region" description="Helical" evidence="1">
    <location>
        <begin position="88"/>
        <end position="108"/>
    </location>
</feature>
<feature type="transmembrane region" description="Helical" evidence="1">
    <location>
        <begin position="110"/>
        <end position="130"/>
    </location>
</feature>
<feature type="transmembrane region" description="Helical" evidence="1">
    <location>
        <begin position="156"/>
        <end position="176"/>
    </location>
</feature>
<feature type="active site" evidence="1">
    <location>
        <position position="142"/>
    </location>
</feature>
<feature type="active site" evidence="1">
    <location>
        <position position="157"/>
    </location>
</feature>
<proteinExistence type="inferred from homology"/>
<dbReference type="EC" id="3.4.23.36" evidence="1"/>
<dbReference type="EMBL" id="U00089">
    <property type="protein sequence ID" value="AAB96190.1"/>
    <property type="molecule type" value="Genomic_DNA"/>
</dbReference>
<dbReference type="PIR" id="S73868">
    <property type="entry name" value="S73868"/>
</dbReference>
<dbReference type="RefSeq" id="NP_109981.1">
    <property type="nucleotide sequence ID" value="NC_000912.1"/>
</dbReference>
<dbReference type="RefSeq" id="WP_010874650.1">
    <property type="nucleotide sequence ID" value="NZ_OU342337.1"/>
</dbReference>
<dbReference type="IntAct" id="P75484">
    <property type="interactions" value="1"/>
</dbReference>
<dbReference type="STRING" id="272634.MPN_293"/>
<dbReference type="EnsemblBacteria" id="AAB96190">
    <property type="protein sequence ID" value="AAB96190"/>
    <property type="gene ID" value="MPN_293"/>
</dbReference>
<dbReference type="GeneID" id="66609060"/>
<dbReference type="KEGG" id="mpn:MPN_293"/>
<dbReference type="PATRIC" id="fig|272634.6.peg.317"/>
<dbReference type="HOGENOM" id="CLU_1466696_0_0_14"/>
<dbReference type="OrthoDB" id="401384at2"/>
<dbReference type="BioCyc" id="MPNE272634:G1GJ3-461-MONOMER"/>
<dbReference type="UniPathway" id="UPA00665"/>
<dbReference type="Proteomes" id="UP000000808">
    <property type="component" value="Chromosome"/>
</dbReference>
<dbReference type="GO" id="GO:0005886">
    <property type="term" value="C:plasma membrane"/>
    <property type="evidence" value="ECO:0007669"/>
    <property type="project" value="UniProtKB-SubCell"/>
</dbReference>
<dbReference type="GO" id="GO:0004190">
    <property type="term" value="F:aspartic-type endopeptidase activity"/>
    <property type="evidence" value="ECO:0007669"/>
    <property type="project" value="UniProtKB-UniRule"/>
</dbReference>
<dbReference type="GO" id="GO:0006508">
    <property type="term" value="P:proteolysis"/>
    <property type="evidence" value="ECO:0007669"/>
    <property type="project" value="UniProtKB-KW"/>
</dbReference>
<dbReference type="HAMAP" id="MF_00161">
    <property type="entry name" value="LspA"/>
    <property type="match status" value="1"/>
</dbReference>
<dbReference type="InterPro" id="IPR001872">
    <property type="entry name" value="Peptidase_A8"/>
</dbReference>
<dbReference type="NCBIfam" id="TIGR00077">
    <property type="entry name" value="lspA"/>
    <property type="match status" value="1"/>
</dbReference>
<dbReference type="PANTHER" id="PTHR33695">
    <property type="entry name" value="LIPOPROTEIN SIGNAL PEPTIDASE"/>
    <property type="match status" value="1"/>
</dbReference>
<dbReference type="PANTHER" id="PTHR33695:SF1">
    <property type="entry name" value="LIPOPROTEIN SIGNAL PEPTIDASE"/>
    <property type="match status" value="1"/>
</dbReference>
<dbReference type="Pfam" id="PF01252">
    <property type="entry name" value="Peptidase_A8"/>
    <property type="match status" value="1"/>
</dbReference>
<dbReference type="PRINTS" id="PR00781">
    <property type="entry name" value="LIPOSIGPTASE"/>
</dbReference>
<dbReference type="PROSITE" id="PS00855">
    <property type="entry name" value="SPASE_II"/>
    <property type="match status" value="1"/>
</dbReference>
<name>LSPA_MYCPN</name>
<gene>
    <name evidence="1" type="primary">lspA</name>
    <name type="synonym">lsp</name>
    <name type="ordered locus">MPN_293</name>
    <name type="ORF">MP542</name>
</gene>
<protein>
    <recommendedName>
        <fullName evidence="1">Lipoprotein signal peptidase</fullName>
        <ecNumber evidence="1">3.4.23.36</ecNumber>
    </recommendedName>
    <alternativeName>
        <fullName evidence="1">Prolipoprotein signal peptidase</fullName>
    </alternativeName>
    <alternativeName>
        <fullName evidence="1">Signal peptidase II</fullName>
        <shortName evidence="1">SPase II</shortName>
    </alternativeName>
</protein>
<accession>P75484</accession>
<evidence type="ECO:0000255" key="1">
    <source>
        <dbReference type="HAMAP-Rule" id="MF_00161"/>
    </source>
</evidence>
<evidence type="ECO:0000305" key="2"/>
<reference key="1">
    <citation type="journal article" date="1996" name="Nucleic Acids Res.">
        <title>Complete sequence analysis of the genome of the bacterium Mycoplasma pneumoniae.</title>
        <authorList>
            <person name="Himmelreich R."/>
            <person name="Hilbert H."/>
            <person name="Plagens H."/>
            <person name="Pirkl E."/>
            <person name="Li B.-C."/>
            <person name="Herrmann R."/>
        </authorList>
    </citation>
    <scope>NUCLEOTIDE SEQUENCE [LARGE SCALE GENOMIC DNA]</scope>
    <source>
        <strain>ATCC 29342 / M129 / Subtype 1</strain>
    </source>
</reference>
<keyword id="KW-0064">Aspartyl protease</keyword>
<keyword id="KW-1003">Cell membrane</keyword>
<keyword id="KW-0378">Hydrolase</keyword>
<keyword id="KW-0472">Membrane</keyword>
<keyword id="KW-0645">Protease</keyword>
<keyword id="KW-1185">Reference proteome</keyword>
<keyword id="KW-0812">Transmembrane</keyword>
<keyword id="KW-1133">Transmembrane helix</keyword>